<organism>
    <name type="scientific">Bacillus caldotenax</name>
    <dbReference type="NCBI Taxonomy" id="1395"/>
    <lineage>
        <taxon>Bacteria</taxon>
        <taxon>Bacillati</taxon>
        <taxon>Bacillota</taxon>
        <taxon>Bacilli</taxon>
        <taxon>Bacillales</taxon>
        <taxon>Anoxybacillaceae</taxon>
        <taxon>Geobacillus</taxon>
        <taxon>Geobacillus thermoleovorans group</taxon>
    </lineage>
</organism>
<dbReference type="EMBL" id="D38057">
    <property type="protein sequence ID" value="BAA07243.1"/>
    <property type="molecule type" value="Genomic_DNA"/>
</dbReference>
<dbReference type="SMR" id="P41013"/>
<dbReference type="GO" id="GO:0005886">
    <property type="term" value="C:plasma membrane"/>
    <property type="evidence" value="ECO:0007669"/>
    <property type="project" value="UniProtKB-SubCell"/>
</dbReference>
<dbReference type="GO" id="GO:0045259">
    <property type="term" value="C:proton-transporting ATP synthase complex"/>
    <property type="evidence" value="ECO:0007669"/>
    <property type="project" value="UniProtKB-KW"/>
</dbReference>
<dbReference type="GO" id="GO:0046933">
    <property type="term" value="F:proton-transporting ATP synthase activity, rotational mechanism"/>
    <property type="evidence" value="ECO:0007669"/>
    <property type="project" value="UniProtKB-UniRule"/>
</dbReference>
<dbReference type="GO" id="GO:0042777">
    <property type="term" value="P:proton motive force-driven plasma membrane ATP synthesis"/>
    <property type="evidence" value="ECO:0007669"/>
    <property type="project" value="TreeGrafter"/>
</dbReference>
<dbReference type="CDD" id="cd00310">
    <property type="entry name" value="ATP-synt_Fo_a_6"/>
    <property type="match status" value="1"/>
</dbReference>
<dbReference type="Gene3D" id="1.20.120.220">
    <property type="entry name" value="ATP synthase, F0 complex, subunit A"/>
    <property type="match status" value="1"/>
</dbReference>
<dbReference type="HAMAP" id="MF_01393">
    <property type="entry name" value="ATP_synth_a_bact"/>
    <property type="match status" value="1"/>
</dbReference>
<dbReference type="InterPro" id="IPR045082">
    <property type="entry name" value="ATP_syn_F0_a_bact/chloroplast"/>
</dbReference>
<dbReference type="InterPro" id="IPR000568">
    <property type="entry name" value="ATP_synth_F0_asu"/>
</dbReference>
<dbReference type="InterPro" id="IPR023011">
    <property type="entry name" value="ATP_synth_F0_asu_AS"/>
</dbReference>
<dbReference type="InterPro" id="IPR035908">
    <property type="entry name" value="F0_ATP_A_sf"/>
</dbReference>
<dbReference type="NCBIfam" id="TIGR01131">
    <property type="entry name" value="ATP_synt_6_or_A"/>
    <property type="match status" value="1"/>
</dbReference>
<dbReference type="NCBIfam" id="NF004479">
    <property type="entry name" value="PRK05815.1-4"/>
    <property type="match status" value="1"/>
</dbReference>
<dbReference type="PANTHER" id="PTHR42823">
    <property type="entry name" value="ATP SYNTHASE SUBUNIT A, CHLOROPLASTIC"/>
    <property type="match status" value="1"/>
</dbReference>
<dbReference type="PANTHER" id="PTHR42823:SF3">
    <property type="entry name" value="ATP SYNTHASE SUBUNIT A, CHLOROPLASTIC"/>
    <property type="match status" value="1"/>
</dbReference>
<dbReference type="Pfam" id="PF00119">
    <property type="entry name" value="ATP-synt_A"/>
    <property type="match status" value="1"/>
</dbReference>
<dbReference type="PRINTS" id="PR00123">
    <property type="entry name" value="ATPASEA"/>
</dbReference>
<dbReference type="SUPFAM" id="SSF81336">
    <property type="entry name" value="F1F0 ATP synthase subunit A"/>
    <property type="match status" value="1"/>
</dbReference>
<dbReference type="PROSITE" id="PS00449">
    <property type="entry name" value="ATPASE_A"/>
    <property type="match status" value="1"/>
</dbReference>
<protein>
    <recommendedName>
        <fullName evidence="1">ATP synthase subunit a</fullName>
    </recommendedName>
    <alternativeName>
        <fullName evidence="1">ATP synthase F0 sector subunit a</fullName>
    </alternativeName>
    <alternativeName>
        <fullName evidence="1">F-ATPase subunit 6</fullName>
    </alternativeName>
</protein>
<reference key="1">
    <citation type="submission" date="1994-08" db="EMBL/GenBank/DDBJ databases">
        <authorList>
            <person name="Ishizuka M."/>
        </authorList>
    </citation>
    <scope>NUCLEOTIDE SEQUENCE [GENOMIC DNA]</scope>
</reference>
<proteinExistence type="inferred from homology"/>
<sequence length="237" mass="26780">MEHKAPLVEFLGLTFNLSDMLMITITCLIVFIIAVAATRSLQLRPTGMQNFMEWVFDFVRGIINSTMDWQTGGRFLTLGVTLIMYVFVANMLGLPFWLDVTVNFGGNRRPTDATVTLTLRDGRRPHHYYGVKMKGASDYLRDYTRPVAWLFPLKIIEEFANTLTLGLRLFGNIYAGEILLGLLASLGTHYGVLGCGSIPMMVIMVWQAFSIFVGTIQAFIFTMLTSFYMAHKISHDH</sequence>
<gene>
    <name evidence="1" type="primary">atpB</name>
</gene>
<accession>P41013</accession>
<evidence type="ECO:0000255" key="1">
    <source>
        <dbReference type="HAMAP-Rule" id="MF_01393"/>
    </source>
</evidence>
<feature type="chain" id="PRO_0000082043" description="ATP synthase subunit a">
    <location>
        <begin position="1"/>
        <end position="237"/>
    </location>
</feature>
<feature type="transmembrane region" description="Helical" evidence="1">
    <location>
        <begin position="17"/>
        <end position="37"/>
    </location>
</feature>
<feature type="transmembrane region" description="Helical" evidence="1">
    <location>
        <begin position="78"/>
        <end position="98"/>
    </location>
</feature>
<feature type="transmembrane region" description="Helical" evidence="1">
    <location>
        <begin position="178"/>
        <end position="198"/>
    </location>
</feature>
<feature type="transmembrane region" description="Helical" evidence="1">
    <location>
        <begin position="201"/>
        <end position="221"/>
    </location>
</feature>
<comment type="function">
    <text evidence="1">Key component of the proton channel; it plays a direct role in the translocation of protons across the membrane.</text>
</comment>
<comment type="subunit">
    <text evidence="1">F-type ATPases have 2 components, CF(1) - the catalytic core - and CF(0) - the membrane proton channel. CF(1) has five subunits: alpha(3), beta(3), gamma(1), delta(1), epsilon(1). CF(0) has three main subunits: a(1), b(2) and c(9-12). The alpha and beta chains form an alternating ring which encloses part of the gamma chain. CF(1) is attached to CF(0) by a central stalk formed by the gamma and epsilon chains, while a peripheral stalk is formed by the delta and b chains.</text>
</comment>
<comment type="subcellular location">
    <subcellularLocation>
        <location evidence="1">Cell membrane</location>
        <topology evidence="1">Multi-pass membrane protein</topology>
    </subcellularLocation>
</comment>
<comment type="similarity">
    <text evidence="1">Belongs to the ATPase A chain family.</text>
</comment>
<keyword id="KW-0066">ATP synthesis</keyword>
<keyword id="KW-1003">Cell membrane</keyword>
<keyword id="KW-0138">CF(0)</keyword>
<keyword id="KW-0375">Hydrogen ion transport</keyword>
<keyword id="KW-0406">Ion transport</keyword>
<keyword id="KW-0472">Membrane</keyword>
<keyword id="KW-0812">Transmembrane</keyword>
<keyword id="KW-1133">Transmembrane helix</keyword>
<keyword id="KW-0813">Transport</keyword>
<name>ATP6_BACCA</name>